<protein>
    <recommendedName>
        <fullName evidence="4">MYB-like transcription factor EOBI</fullName>
    </recommendedName>
    <alternativeName>
        <fullName evidence="4">Protein EMISSION OF BENZENOIDS I</fullName>
        <shortName evidence="4">PhEOBI</shortName>
    </alternativeName>
</protein>
<evidence type="ECO:0000255" key="1">
    <source>
        <dbReference type="PROSITE-ProRule" id="PRU00625"/>
    </source>
</evidence>
<evidence type="ECO:0000256" key="2">
    <source>
        <dbReference type="SAM" id="MobiDB-lite"/>
    </source>
</evidence>
<evidence type="ECO:0000269" key="3">
    <source>
    </source>
</evidence>
<evidence type="ECO:0000303" key="4">
    <source>
    </source>
</evidence>
<reference key="1">
    <citation type="journal article" date="2012" name="Plant Cell">
        <title>The R2R3-MYB-like regulatory factor EOBI, acting downstream of EOBII, regulates scent production by activating ODO1 and structural scent-related genes in petunia.</title>
        <authorList>
            <person name="Spitzer-Rimon B."/>
            <person name="Farhi M."/>
            <person name="Albo B."/>
            <person name="Cna'ani A."/>
            <person name="Ben Zvi M.M."/>
            <person name="Masci T."/>
            <person name="Edelbaum O."/>
            <person name="Yu Y."/>
            <person name="Shklarman E."/>
            <person name="Ovadis M."/>
            <person name="Vainstein A."/>
        </authorList>
    </citation>
    <scope>NUCLEOTIDE SEQUENCE [MRNA]</scope>
    <scope>FUNCTION</scope>
    <scope>DISRUPTION PHENOTYPE</scope>
    <scope>INDUCTION BY EOBII</scope>
    <scope>TISSUE SPECIFICITY</scope>
    <scope>DEVELOPMENTAL STAGE</scope>
    <scope>INDUCTION</scope>
    <scope>SUBCELLULAR LOCATION</scope>
    <scope>GENE FAMILY</scope>
    <scope>NOMENCLATURE</scope>
    <source>
        <strain>cv. W115</strain>
    </source>
</reference>
<reference key="2">
    <citation type="submission" date="2010-05" db="EMBL/GenBank/DDBJ databases">
        <title>EOBI phenylpropanoid pathway-related transcription factor.</title>
        <authorList>
            <person name="Spitzer B."/>
            <person name="Marhevka E."/>
            <person name="Ovadis M."/>
            <person name="Barkai O."/>
            <person name="Vainstein A."/>
        </authorList>
    </citation>
    <scope>NUCLEOTIDE SEQUENCE [MRNA] OF 12-116</scope>
    <source>
        <strain>cv. Violet 26</strain>
    </source>
</reference>
<accession>L7R9Z0</accession>
<accession>F1LKD1</accession>
<keyword id="KW-0238">DNA-binding</keyword>
<keyword id="KW-0539">Nucleus</keyword>
<keyword id="KW-0677">Repeat</keyword>
<keyword id="KW-0804">Transcription</keyword>
<keyword id="KW-0805">Transcription regulation</keyword>
<feature type="chain" id="PRO_0000451490" description="MYB-like transcription factor EOBI">
    <location>
        <begin position="1"/>
        <end position="201"/>
    </location>
</feature>
<feature type="domain" description="HTH myb-type 1" evidence="1">
    <location>
        <begin position="10"/>
        <end position="62"/>
    </location>
</feature>
<feature type="domain" description="HTH myb-type 2" evidence="1">
    <location>
        <begin position="63"/>
        <end position="117"/>
    </location>
</feature>
<feature type="DNA-binding region" description="H-T-H motif" evidence="1">
    <location>
        <begin position="38"/>
        <end position="62"/>
    </location>
</feature>
<feature type="DNA-binding region" description="H-T-H motif" evidence="1">
    <location>
        <begin position="90"/>
        <end position="113"/>
    </location>
</feature>
<feature type="region of interest" description="Disordered" evidence="2">
    <location>
        <begin position="121"/>
        <end position="170"/>
    </location>
</feature>
<feature type="compositionally biased region" description="Polar residues" evidence="2">
    <location>
        <begin position="135"/>
        <end position="159"/>
    </location>
</feature>
<feature type="compositionally biased region" description="Low complexity" evidence="2">
    <location>
        <begin position="160"/>
        <end position="169"/>
    </location>
</feature>
<gene>
    <name evidence="4" type="primary">EOBI</name>
</gene>
<organism>
    <name type="scientific">Petunia hybrida</name>
    <name type="common">Petunia</name>
    <dbReference type="NCBI Taxonomy" id="4102"/>
    <lineage>
        <taxon>Eukaryota</taxon>
        <taxon>Viridiplantae</taxon>
        <taxon>Streptophyta</taxon>
        <taxon>Embryophyta</taxon>
        <taxon>Tracheophyta</taxon>
        <taxon>Spermatophyta</taxon>
        <taxon>Magnoliopsida</taxon>
        <taxon>eudicotyledons</taxon>
        <taxon>Gunneridae</taxon>
        <taxon>Pentapetalae</taxon>
        <taxon>asterids</taxon>
        <taxon>lamiids</taxon>
        <taxon>Solanales</taxon>
        <taxon>Solanaceae</taxon>
        <taxon>Petunioideae</taxon>
        <taxon>Petunia</taxon>
    </lineage>
</organism>
<name>EOBI_PETHY</name>
<dbReference type="EMBL" id="KC182627">
    <property type="protein sequence ID" value="AGC00813.1"/>
    <property type="molecule type" value="mRNA"/>
</dbReference>
<dbReference type="EMBL" id="EU360892">
    <property type="protein sequence ID" value="ACB59076.2"/>
    <property type="molecule type" value="mRNA"/>
</dbReference>
<dbReference type="SMR" id="L7R9Z0"/>
<dbReference type="GO" id="GO:0005634">
    <property type="term" value="C:nucleus"/>
    <property type="evidence" value="ECO:0000314"/>
    <property type="project" value="UniProtKB"/>
</dbReference>
<dbReference type="GO" id="GO:0003700">
    <property type="term" value="F:DNA-binding transcription factor activity"/>
    <property type="evidence" value="ECO:0007669"/>
    <property type="project" value="InterPro"/>
</dbReference>
<dbReference type="GO" id="GO:0000976">
    <property type="term" value="F:transcription cis-regulatory region binding"/>
    <property type="evidence" value="ECO:0000314"/>
    <property type="project" value="UniProtKB"/>
</dbReference>
<dbReference type="GO" id="GO:0007623">
    <property type="term" value="P:circadian rhythm"/>
    <property type="evidence" value="ECO:0000270"/>
    <property type="project" value="UniProtKB"/>
</dbReference>
<dbReference type="GO" id="GO:0010597">
    <property type="term" value="P:green leaf volatile biosynthetic process"/>
    <property type="evidence" value="ECO:0000315"/>
    <property type="project" value="UniProtKB"/>
</dbReference>
<dbReference type="GO" id="GO:0045893">
    <property type="term" value="P:positive regulation of DNA-templated transcription"/>
    <property type="evidence" value="ECO:0000314"/>
    <property type="project" value="UniProtKB"/>
</dbReference>
<dbReference type="GO" id="GO:2000762">
    <property type="term" value="P:regulation of phenylpropanoid metabolic process"/>
    <property type="evidence" value="ECO:0000315"/>
    <property type="project" value="UniProtKB"/>
</dbReference>
<dbReference type="GO" id="GO:0019632">
    <property type="term" value="P:shikimate metabolic process"/>
    <property type="evidence" value="ECO:0000315"/>
    <property type="project" value="UniProtKB"/>
</dbReference>
<dbReference type="CDD" id="cd00167">
    <property type="entry name" value="SANT"/>
    <property type="match status" value="2"/>
</dbReference>
<dbReference type="FunFam" id="1.10.10.60:FF:000011">
    <property type="entry name" value="Myb transcription factor"/>
    <property type="match status" value="1"/>
</dbReference>
<dbReference type="FunFam" id="1.10.10.60:FF:000358">
    <property type="entry name" value="Myb-related protein 305"/>
    <property type="match status" value="1"/>
</dbReference>
<dbReference type="Gene3D" id="1.10.10.60">
    <property type="entry name" value="Homeodomain-like"/>
    <property type="match status" value="2"/>
</dbReference>
<dbReference type="InterPro" id="IPR044676">
    <property type="entry name" value="EOBI/EOBII-like_plant"/>
</dbReference>
<dbReference type="InterPro" id="IPR009057">
    <property type="entry name" value="Homeodomain-like_sf"/>
</dbReference>
<dbReference type="InterPro" id="IPR017930">
    <property type="entry name" value="Myb_dom"/>
</dbReference>
<dbReference type="InterPro" id="IPR001005">
    <property type="entry name" value="SANT/Myb"/>
</dbReference>
<dbReference type="PANTHER" id="PTHR45675">
    <property type="entry name" value="MYB TRANSCRIPTION FACTOR-RELATED-RELATED"/>
    <property type="match status" value="1"/>
</dbReference>
<dbReference type="PANTHER" id="PTHR45675:SF44">
    <property type="entry name" value="TRANSCRIPTION FACTOR MYB24"/>
    <property type="match status" value="1"/>
</dbReference>
<dbReference type="Pfam" id="PF00249">
    <property type="entry name" value="Myb_DNA-binding"/>
    <property type="match status" value="2"/>
</dbReference>
<dbReference type="SMART" id="SM00717">
    <property type="entry name" value="SANT"/>
    <property type="match status" value="2"/>
</dbReference>
<dbReference type="SUPFAM" id="SSF46689">
    <property type="entry name" value="Homeodomain-like"/>
    <property type="match status" value="1"/>
</dbReference>
<dbReference type="PROSITE" id="PS51294">
    <property type="entry name" value="HTH_MYB"/>
    <property type="match status" value="2"/>
</dbReference>
<comment type="function">
    <text evidence="3">MYB-type transcription factor controlling the production of volatile organic compounds (VOCs), including floral volatile benzenoids and phenylpropanoids (FVBP), in flowers of fragrant cultivars (e.g. cv. Mitchell and cv. V26) by regulating the expression of ODO1, a key regulator of the shikimate pathway, and of several biosynthetic floral scent-related genes (e.g. IGS, EGS, BSMT1, BSMT2, PAL1, PAL2, EPSPS, DAHPS, CS, CM1, ADT1 and PPA-AT) (PubMed:23275577). Binds to and activates the promoters of at least ODO1, IGS1 and PAL1 (PubMed:23275577).</text>
</comment>
<comment type="subcellular location">
    <subcellularLocation>
        <location evidence="1 3">Nucleus</location>
    </subcellularLocation>
</comment>
<comment type="tissue specificity">
    <text evidence="3">Expressed exclusively in flower organs (PubMed:23275577). Accumulates mostly in flower limbs, to a lower extent in pistils and flower tubes, and, at low levels, in stamens (PubMed:23275577).</text>
</comment>
<comment type="developmental stage">
    <text evidence="3">Accumulates progressively in flower limbs during flower development, reaching maximal levels at anthesis.</text>
</comment>
<comment type="induction">
    <text evidence="3">Circadian-regulation with higher levels during the light period in flowers (PubMed:23275577). Activated by EOBII but repressed by ODO1 via the regulation of its promoter (PubMed:23275577).</text>
</comment>
<comment type="disruption phenotype">
    <text evidence="3">Down-regulation of ODO1 and numerous structural scent-related genes from both the shikimate and phenylpropanoid pathways (e.g. IGS, EGS, BSMT1, BSMT2, PAL1, PAL2, EPSPS, DAHPS, CS, CM1, ADT1 and PPA-AT) leading to reduced scent production (reduced emission of volatile phenylpropanoids, e.g. benzyl alcohol, benzylbenzoate, methylbenzoate, methylsalicylate, eugenol and isoeugenol).</text>
</comment>
<proteinExistence type="evidence at transcript level"/>
<sequence length="201" mass="23315">MDKRTCNSQDVEVRKGPWTMEEDLILINYIANHGEGVWNSLARSAGLKRTGKSCRLRWLNYLRPDVRRGNITPEEQLLIMELHAKWGNRWSKIAKHLPGRTDNEIKNYWRTRIQKHIKQADQNMKKPSKCEQNDQKAISTSQASTGPTDTIDSYSPSSYTENTNNNMENITFQGNFPTETNENIWSMEDLWSLQLLNDATN</sequence>